<keyword id="KW-0324">Glycolysis</keyword>
<keyword id="KW-0413">Isomerase</keyword>
<keyword id="KW-0460">Magnesium</keyword>
<keyword id="KW-1185">Reference proteome</keyword>
<dbReference type="EC" id="5.4.2.12"/>
<dbReference type="EMBL" id="L77117">
    <property type="protein sequence ID" value="AAB99632.1"/>
    <property type="molecule type" value="Genomic_DNA"/>
</dbReference>
<dbReference type="PIR" id="C64501">
    <property type="entry name" value="C64501"/>
</dbReference>
<dbReference type="RefSeq" id="WP_010871137.1">
    <property type="nucleotide sequence ID" value="NC_000909.1"/>
</dbReference>
<dbReference type="SMR" id="Q59007"/>
<dbReference type="FunCoup" id="Q59007">
    <property type="interactions" value="178"/>
</dbReference>
<dbReference type="STRING" id="243232.MJ_1612"/>
<dbReference type="PaxDb" id="243232-MJ_1612"/>
<dbReference type="DNASU" id="1452521"/>
<dbReference type="EnsemblBacteria" id="AAB99632">
    <property type="protein sequence ID" value="AAB99632"/>
    <property type="gene ID" value="MJ_1612"/>
</dbReference>
<dbReference type="GeneID" id="1452521"/>
<dbReference type="KEGG" id="mja:MJ_1612"/>
<dbReference type="eggNOG" id="arCOG01696">
    <property type="taxonomic scope" value="Archaea"/>
</dbReference>
<dbReference type="HOGENOM" id="CLU_034906_2_0_2"/>
<dbReference type="InParanoid" id="Q59007"/>
<dbReference type="OrthoDB" id="52918at2157"/>
<dbReference type="PhylomeDB" id="Q59007"/>
<dbReference type="BioCyc" id="MetaCyc:MONOMER-4905"/>
<dbReference type="BRENDA" id="5.4.2.12">
    <property type="organism ID" value="3260"/>
</dbReference>
<dbReference type="UniPathway" id="UPA00109">
    <property type="reaction ID" value="UER00186"/>
</dbReference>
<dbReference type="Proteomes" id="UP000000805">
    <property type="component" value="Chromosome"/>
</dbReference>
<dbReference type="GO" id="GO:0046872">
    <property type="term" value="F:metal ion binding"/>
    <property type="evidence" value="ECO:0007669"/>
    <property type="project" value="InterPro"/>
</dbReference>
<dbReference type="GO" id="GO:0004619">
    <property type="term" value="F:phosphoglycerate mutase activity"/>
    <property type="evidence" value="ECO:0007669"/>
    <property type="project" value="UniProtKB-EC"/>
</dbReference>
<dbReference type="GO" id="GO:0006096">
    <property type="term" value="P:glycolytic process"/>
    <property type="evidence" value="ECO:0007669"/>
    <property type="project" value="UniProtKB-UniRule"/>
</dbReference>
<dbReference type="CDD" id="cd16011">
    <property type="entry name" value="iPGM_like"/>
    <property type="match status" value="1"/>
</dbReference>
<dbReference type="Gene3D" id="3.40.720.10">
    <property type="entry name" value="Alkaline Phosphatase, subunit A"/>
    <property type="match status" value="1"/>
</dbReference>
<dbReference type="Gene3D" id="3.30.70.2130">
    <property type="entry name" value="Metalloenzyme domain"/>
    <property type="match status" value="1"/>
</dbReference>
<dbReference type="HAMAP" id="MF_01402_A">
    <property type="entry name" value="ApgM_A"/>
    <property type="match status" value="1"/>
</dbReference>
<dbReference type="InterPro" id="IPR017850">
    <property type="entry name" value="Alkaline_phosphatase_core_sf"/>
</dbReference>
<dbReference type="InterPro" id="IPR023665">
    <property type="entry name" value="ApgAM_prokaryotes"/>
</dbReference>
<dbReference type="InterPro" id="IPR006124">
    <property type="entry name" value="Metalloenzyme"/>
</dbReference>
<dbReference type="InterPro" id="IPR004456">
    <property type="entry name" value="Pglycerate_mutase_ApgM"/>
</dbReference>
<dbReference type="InterPro" id="IPR042253">
    <property type="entry name" value="Pglycerate_mutase_ApgM_sf"/>
</dbReference>
<dbReference type="NCBIfam" id="TIGR00306">
    <property type="entry name" value="apgM"/>
    <property type="match status" value="1"/>
</dbReference>
<dbReference type="NCBIfam" id="NF003104">
    <property type="entry name" value="PRK04024.1"/>
    <property type="match status" value="1"/>
</dbReference>
<dbReference type="PANTHER" id="PTHR31209">
    <property type="entry name" value="COFACTOR-INDEPENDENT PHOSPHOGLYCERATE MUTASE"/>
    <property type="match status" value="1"/>
</dbReference>
<dbReference type="PANTHER" id="PTHR31209:SF0">
    <property type="entry name" value="METALLOENZYME DOMAIN-CONTAINING PROTEIN"/>
    <property type="match status" value="1"/>
</dbReference>
<dbReference type="Pfam" id="PF01676">
    <property type="entry name" value="Metalloenzyme"/>
    <property type="match status" value="1"/>
</dbReference>
<dbReference type="Pfam" id="PF10143">
    <property type="entry name" value="PhosphMutase"/>
    <property type="match status" value="1"/>
</dbReference>
<dbReference type="PIRSF" id="PIRSF006392">
    <property type="entry name" value="IPGAM_arch"/>
    <property type="match status" value="1"/>
</dbReference>
<dbReference type="SUPFAM" id="SSF53649">
    <property type="entry name" value="Alkaline phosphatase-like"/>
    <property type="match status" value="1"/>
</dbReference>
<sequence>MKKGKCVIFIIDGLGDRPNEKGLTPLKEAKTPTMDKIAKEGICGLMNAIDIGIRPGSDTAHLAILGYNPYEVYTGRGPLEAFGVGLDLKEGDIAFRCNFATVDENFVVLDRRAGRISPEEAEELEKEIDGLEIDGVKVIFKSSKGYRGALVLRGEGLSCRVSDGDPHEEGVKVSEIKPLDDSEEAKRTAEILNKLLKIVYEKLNNHPINEERRKKGLPPANIILPRGAGVVPKIEKFSEKYNMKGACICGTGLIKGMAKMIGLDVIEVEGATGTPKTNFMGKAKALVEALKEYDFVLVNVKGADEASHDGNYELKKEVLEKIDEMLAYVFEHINKDEVYFVLTGDHSTPIEMKDHSADPIPIVIWGKSVRVDDVTEFNEFACAKGALHWIKGEHVMKILLDLTGRNEKFGA</sequence>
<gene>
    <name type="primary">apgM1</name>
    <name type="ordered locus">MJ1612</name>
</gene>
<protein>
    <recommendedName>
        <fullName>2,3-bisphosphoglycerate-independent phosphoglycerate mutase 1</fullName>
        <shortName>BPG-independent PGAM 1</shortName>
        <shortName>Phosphoglyceromutase 1</shortName>
        <shortName>aPGAM 1</shortName>
        <ecNumber>5.4.2.12</ecNumber>
    </recommendedName>
    <alternativeName>
        <fullName>aPGAM-Mj1</fullName>
    </alternativeName>
</protein>
<accession>Q59007</accession>
<feature type="chain" id="PRO_0000138134" description="2,3-bisphosphoglycerate-independent phosphoglycerate mutase 1">
    <location>
        <begin position="1"/>
        <end position="411"/>
    </location>
</feature>
<name>APGM1_METJA</name>
<proteinExistence type="evidence at protein level"/>
<comment type="function">
    <text evidence="1 2">Catalyzes the interconversion of 2-phosphoglycerate and 3-phosphoglycerate.</text>
</comment>
<comment type="catalytic activity">
    <reaction evidence="1 2">
        <text>(2R)-2-phosphoglycerate = (2R)-3-phosphoglycerate</text>
        <dbReference type="Rhea" id="RHEA:15901"/>
        <dbReference type="ChEBI" id="CHEBI:58272"/>
        <dbReference type="ChEBI" id="CHEBI:58289"/>
        <dbReference type="EC" id="5.4.2.12"/>
    </reaction>
</comment>
<comment type="cofactor">
    <cofactor evidence="4">
        <name>Mg(2+)</name>
        <dbReference type="ChEBI" id="CHEBI:18420"/>
    </cofactor>
</comment>
<comment type="activity regulation">
    <text evidence="2">Inhibited to approximately 20% by EDTA.</text>
</comment>
<comment type="biophysicochemical properties">
    <phDependence>
        <text evidence="2">Optimum pH is 8.0.</text>
    </phDependence>
</comment>
<comment type="pathway">
    <text evidence="2">Carbohydrate degradation; glycolysis; pyruvate from D-glyceraldehyde 3-phosphate: step 3/5.</text>
</comment>
<comment type="subunit">
    <text evidence="4">Homotetramer.</text>
</comment>
<comment type="similarity">
    <text evidence="3">Belongs to the BPG-independent phosphoglycerate mutase family. A-PGAM subfamily.</text>
</comment>
<organism>
    <name type="scientific">Methanocaldococcus jannaschii (strain ATCC 43067 / DSM 2661 / JAL-1 / JCM 10045 / NBRC 100440)</name>
    <name type="common">Methanococcus jannaschii</name>
    <dbReference type="NCBI Taxonomy" id="243232"/>
    <lineage>
        <taxon>Archaea</taxon>
        <taxon>Methanobacteriati</taxon>
        <taxon>Methanobacteriota</taxon>
        <taxon>Methanomada group</taxon>
        <taxon>Methanococci</taxon>
        <taxon>Methanococcales</taxon>
        <taxon>Methanocaldococcaceae</taxon>
        <taxon>Methanocaldococcus</taxon>
    </lineage>
</organism>
<evidence type="ECO:0000269" key="1">
    <source>
    </source>
</evidence>
<evidence type="ECO:0000269" key="2">
    <source>
    </source>
</evidence>
<evidence type="ECO:0000305" key="3"/>
<evidence type="ECO:0000305" key="4">
    <source>
    </source>
</evidence>
<reference key="1">
    <citation type="journal article" date="1996" name="Science">
        <title>Complete genome sequence of the methanogenic archaeon, Methanococcus jannaschii.</title>
        <authorList>
            <person name="Bult C.J."/>
            <person name="White O."/>
            <person name="Olsen G.J."/>
            <person name="Zhou L."/>
            <person name="Fleischmann R.D."/>
            <person name="Sutton G.G."/>
            <person name="Blake J.A."/>
            <person name="FitzGerald L.M."/>
            <person name="Clayton R.A."/>
            <person name="Gocayne J.D."/>
            <person name="Kerlavage A.R."/>
            <person name="Dougherty B.A."/>
            <person name="Tomb J.-F."/>
            <person name="Adams M.D."/>
            <person name="Reich C.I."/>
            <person name="Overbeek R."/>
            <person name="Kirkness E.F."/>
            <person name="Weinstock K.G."/>
            <person name="Merrick J.M."/>
            <person name="Glodek A."/>
            <person name="Scott J.L."/>
            <person name="Geoghagen N.S.M."/>
            <person name="Weidman J.F."/>
            <person name="Fuhrmann J.L."/>
            <person name="Nguyen D."/>
            <person name="Utterback T.R."/>
            <person name="Kelley J.M."/>
            <person name="Peterson J.D."/>
            <person name="Sadow P.W."/>
            <person name="Hanna M.C."/>
            <person name="Cotton M.D."/>
            <person name="Roberts K.M."/>
            <person name="Hurst M.A."/>
            <person name="Kaine B.P."/>
            <person name="Borodovsky M."/>
            <person name="Klenk H.-P."/>
            <person name="Fraser C.M."/>
            <person name="Smith H.O."/>
            <person name="Woese C.R."/>
            <person name="Venter J.C."/>
        </authorList>
    </citation>
    <scope>NUCLEOTIDE SEQUENCE [LARGE SCALE GENOMIC DNA]</scope>
    <source>
        <strain>ATCC 43067 / DSM 2661 / JAL-1 / JCM 10045 / NBRC 100440</strain>
    </source>
</reference>
<reference key="2">
    <citation type="journal article" date="2002" name="FEBS Lett.">
        <title>A divergent archaeal member of the alkaline phosphatase binuclear metalloenzyme superfamily has phosphoglycerate mutase activity.</title>
        <authorList>
            <person name="Graham D.E."/>
            <person name="Xu H."/>
            <person name="White R.H."/>
        </authorList>
    </citation>
    <scope>FUNCTION</scope>
    <scope>CATALYTIC ACTIVITY</scope>
    <source>
        <strain>ATCC 43067 / DSM 2661 / JAL-1 / JCM 10045 / NBRC 100440</strain>
    </source>
</reference>
<reference key="3">
    <citation type="journal article" date="2002" name="FEMS Microbiol. Lett.">
        <title>Molecular characterization of phosphoglycerate mutase in archaea.</title>
        <authorList>
            <person name="van der Oost J."/>
            <person name="Huynen M.A."/>
            <person name="Verhees C.H."/>
        </authorList>
    </citation>
    <scope>FUNCTION</scope>
    <scope>CATALYTIC ACTIVITY</scope>
    <scope>COFACTOR</scope>
    <scope>ACTIVITY REGULATION</scope>
    <scope>BIOPHYSICOCHEMICAL PROPERTIES</scope>
    <scope>PATHWAY</scope>
    <scope>SUBUNIT</scope>
    <source>
        <strain>ATCC 43067 / DSM 2661 / JAL-1 / JCM 10045 / NBRC 100440</strain>
    </source>
</reference>